<evidence type="ECO:0000250" key="1"/>
<evidence type="ECO:0000250" key="2">
    <source>
        <dbReference type="UniProtKB" id="P20585"/>
    </source>
</evidence>
<evidence type="ECO:0000255" key="3"/>
<evidence type="ECO:0000256" key="4">
    <source>
        <dbReference type="SAM" id="MobiDB-lite"/>
    </source>
</evidence>
<evidence type="ECO:0000305" key="5"/>
<reference key="1">
    <citation type="submission" date="1992-04" db="EMBL/GenBank/DDBJ databases">
        <authorList>
            <person name="Liu K."/>
            <person name="Niu L."/>
            <person name="Linton J.P."/>
            <person name="Crouse G.F."/>
        </authorList>
    </citation>
    <scope>NUCLEOTIDE SEQUENCE [MRNA]</scope>
</reference>
<reference key="2">
    <citation type="journal article" date="1994" name="Gene">
        <title>Characterization of the mouse Rep-3 gene: sequence similarities to bacterial and yeast mismatch-repair proteins.</title>
        <authorList>
            <person name="Liu K."/>
            <person name="Niu L."/>
            <person name="Linton J.P."/>
            <person name="Crouse G.F."/>
        </authorList>
    </citation>
    <scope>NUCLEOTIDE SEQUENCE [GENOMIC DNA]</scope>
</reference>
<reference key="3">
    <citation type="journal article" date="1989" name="Mol. Cell. Biol.">
        <title>Dual bidirectional promoters at the mouse dhfr locus: cloning and characterization of two mRNA classes of the divergently transcribed Rep-1 gene.</title>
        <authorList>
            <person name="Linton J.P."/>
            <person name="Yen J.-Y.J."/>
            <person name="Selby E."/>
            <person name="Chen Z."/>
            <person name="Chinsky J.M."/>
            <person name="Liu K."/>
            <person name="Kellems R.E."/>
            <person name="Crouse G.F."/>
        </authorList>
    </citation>
    <scope>NUCLEOTIDE SEQUENCE [MRNA] OF 1-917</scope>
</reference>
<dbReference type="EMBL" id="M80360">
    <property type="protein sequence ID" value="AAA40052.1"/>
    <property type="molecule type" value="mRNA"/>
</dbReference>
<dbReference type="EMBL" id="L10319">
    <property type="protein sequence ID" value="AAB60711.1"/>
    <property type="molecule type" value="Genomic_DNA"/>
</dbReference>
<dbReference type="EMBL" id="L10295">
    <property type="protein sequence ID" value="AAB60711.1"/>
    <property type="status" value="JOINED"/>
    <property type="molecule type" value="Genomic_DNA"/>
</dbReference>
<dbReference type="EMBL" id="L10296">
    <property type="protein sequence ID" value="AAB60711.1"/>
    <property type="status" value="JOINED"/>
    <property type="molecule type" value="Genomic_DNA"/>
</dbReference>
<dbReference type="EMBL" id="L10297">
    <property type="protein sequence ID" value="AAB60711.1"/>
    <property type="status" value="JOINED"/>
    <property type="molecule type" value="Genomic_DNA"/>
</dbReference>
<dbReference type="EMBL" id="L10298">
    <property type="protein sequence ID" value="AAB60711.1"/>
    <property type="status" value="JOINED"/>
    <property type="molecule type" value="Genomic_DNA"/>
</dbReference>
<dbReference type="EMBL" id="L10299">
    <property type="protein sequence ID" value="AAB60711.1"/>
    <property type="status" value="JOINED"/>
    <property type="molecule type" value="Genomic_DNA"/>
</dbReference>
<dbReference type="EMBL" id="L10300">
    <property type="protein sequence ID" value="AAB60711.1"/>
    <property type="status" value="JOINED"/>
    <property type="molecule type" value="Genomic_DNA"/>
</dbReference>
<dbReference type="EMBL" id="L10301">
    <property type="protein sequence ID" value="AAB60711.1"/>
    <property type="status" value="JOINED"/>
    <property type="molecule type" value="Genomic_DNA"/>
</dbReference>
<dbReference type="EMBL" id="L10304">
    <property type="protein sequence ID" value="AAB60711.1"/>
    <property type="status" value="JOINED"/>
    <property type="molecule type" value="Genomic_DNA"/>
</dbReference>
<dbReference type="EMBL" id="L10305">
    <property type="protein sequence ID" value="AAB60711.1"/>
    <property type="status" value="JOINED"/>
    <property type="molecule type" value="Genomic_DNA"/>
</dbReference>
<dbReference type="EMBL" id="L10306">
    <property type="protein sequence ID" value="AAB60711.1"/>
    <property type="status" value="JOINED"/>
    <property type="molecule type" value="Genomic_DNA"/>
</dbReference>
<dbReference type="EMBL" id="L10307">
    <property type="protein sequence ID" value="AAB60711.1"/>
    <property type="status" value="JOINED"/>
    <property type="molecule type" value="Genomic_DNA"/>
</dbReference>
<dbReference type="EMBL" id="L10308">
    <property type="protein sequence ID" value="AAB60711.1"/>
    <property type="status" value="JOINED"/>
    <property type="molecule type" value="Genomic_DNA"/>
</dbReference>
<dbReference type="EMBL" id="L10309">
    <property type="protein sequence ID" value="AAB60711.1"/>
    <property type="status" value="JOINED"/>
    <property type="molecule type" value="Genomic_DNA"/>
</dbReference>
<dbReference type="EMBL" id="L10310">
    <property type="protein sequence ID" value="AAB60711.1"/>
    <property type="status" value="JOINED"/>
    <property type="molecule type" value="Genomic_DNA"/>
</dbReference>
<dbReference type="EMBL" id="L10311">
    <property type="protein sequence ID" value="AAB60711.1"/>
    <property type="status" value="JOINED"/>
    <property type="molecule type" value="Genomic_DNA"/>
</dbReference>
<dbReference type="EMBL" id="L10312">
    <property type="protein sequence ID" value="AAB60711.1"/>
    <property type="status" value="JOINED"/>
    <property type="molecule type" value="Genomic_DNA"/>
</dbReference>
<dbReference type="EMBL" id="L10313">
    <property type="protein sequence ID" value="AAB60711.1"/>
    <property type="status" value="JOINED"/>
    <property type="molecule type" value="Genomic_DNA"/>
</dbReference>
<dbReference type="EMBL" id="L10314">
    <property type="protein sequence ID" value="AAB60711.1"/>
    <property type="status" value="JOINED"/>
    <property type="molecule type" value="Genomic_DNA"/>
</dbReference>
<dbReference type="EMBL" id="L10315">
    <property type="protein sequence ID" value="AAB60711.1"/>
    <property type="status" value="JOINED"/>
    <property type="molecule type" value="Genomic_DNA"/>
</dbReference>
<dbReference type="EMBL" id="L10316">
    <property type="protein sequence ID" value="AAB60711.1"/>
    <property type="status" value="JOINED"/>
    <property type="molecule type" value="Genomic_DNA"/>
</dbReference>
<dbReference type="EMBL" id="L10317">
    <property type="protein sequence ID" value="AAB60711.1"/>
    <property type="status" value="JOINED"/>
    <property type="molecule type" value="Genomic_DNA"/>
</dbReference>
<dbReference type="EMBL" id="L10318">
    <property type="protein sequence ID" value="AAB60711.1"/>
    <property type="status" value="JOINED"/>
    <property type="molecule type" value="Genomic_DNA"/>
</dbReference>
<dbReference type="EMBL" id="M24919">
    <property type="protein sequence ID" value="AAA40051.1"/>
    <property type="status" value="ALT_SEQ"/>
    <property type="molecule type" value="mRNA"/>
</dbReference>
<dbReference type="PIR" id="A32495">
    <property type="entry name" value="A32495"/>
</dbReference>
<dbReference type="RefSeq" id="NP_034959.2">
    <property type="nucleotide sequence ID" value="NM_010829.2"/>
</dbReference>
<dbReference type="SMR" id="P13705"/>
<dbReference type="BioGRID" id="201526">
    <property type="interactions" value="2"/>
</dbReference>
<dbReference type="ComplexPortal" id="CPX-78">
    <property type="entry name" value="DNA mismatch repair MutSbeta complex"/>
</dbReference>
<dbReference type="FunCoup" id="P13705">
    <property type="interactions" value="1349"/>
</dbReference>
<dbReference type="STRING" id="10090.ENSMUSP00000140002"/>
<dbReference type="GlyGen" id="P13705">
    <property type="glycosylation" value="2 sites, 1 N-linked glycan (1 site), 1 O-linked glycan (1 site)"/>
</dbReference>
<dbReference type="iPTMnet" id="P13705"/>
<dbReference type="PhosphoSitePlus" id="P13705"/>
<dbReference type="PaxDb" id="10090-ENSMUSP00000140002"/>
<dbReference type="PeptideAtlas" id="P13705"/>
<dbReference type="ProteomicsDB" id="291513"/>
<dbReference type="Pumba" id="P13705"/>
<dbReference type="DNASU" id="17686"/>
<dbReference type="GeneID" id="17686"/>
<dbReference type="KEGG" id="mmu:17686"/>
<dbReference type="AGR" id="MGI:109519"/>
<dbReference type="CTD" id="4437"/>
<dbReference type="MGI" id="MGI:109519">
    <property type="gene designation" value="Msh3"/>
</dbReference>
<dbReference type="eggNOG" id="KOG0218">
    <property type="taxonomic scope" value="Eukaryota"/>
</dbReference>
<dbReference type="InParanoid" id="P13705"/>
<dbReference type="OrthoDB" id="121051at2759"/>
<dbReference type="PhylomeDB" id="P13705"/>
<dbReference type="Reactome" id="R-MMU-5358606">
    <property type="pathway name" value="Mismatch repair (MMR) directed by MSH2:MSH3 (MutSbeta)"/>
</dbReference>
<dbReference type="BioGRID-ORCS" id="17686">
    <property type="hits" value="2 hits in 112 CRISPR screens"/>
</dbReference>
<dbReference type="ChiTaRS" id="Msh3">
    <property type="organism name" value="mouse"/>
</dbReference>
<dbReference type="PRO" id="PR:P13705"/>
<dbReference type="Proteomes" id="UP000000589">
    <property type="component" value="Unplaced"/>
</dbReference>
<dbReference type="RNAct" id="P13705">
    <property type="molecule type" value="protein"/>
</dbReference>
<dbReference type="GO" id="GO:0032302">
    <property type="term" value="C:MutSbeta complex"/>
    <property type="evidence" value="ECO:0000266"/>
    <property type="project" value="ComplexPortal"/>
</dbReference>
<dbReference type="GO" id="GO:0005524">
    <property type="term" value="F:ATP binding"/>
    <property type="evidence" value="ECO:0007669"/>
    <property type="project" value="UniProtKB-KW"/>
</dbReference>
<dbReference type="GO" id="GO:0140664">
    <property type="term" value="F:ATP-dependent DNA damage sensor activity"/>
    <property type="evidence" value="ECO:0007669"/>
    <property type="project" value="InterPro"/>
</dbReference>
<dbReference type="GO" id="GO:0019237">
    <property type="term" value="F:centromeric DNA binding"/>
    <property type="evidence" value="ECO:0000314"/>
    <property type="project" value="MGI"/>
</dbReference>
<dbReference type="GO" id="GO:0003684">
    <property type="term" value="F:damaged DNA binding"/>
    <property type="evidence" value="ECO:0000316"/>
    <property type="project" value="MGI"/>
</dbReference>
<dbReference type="GO" id="GO:0003677">
    <property type="term" value="F:DNA binding"/>
    <property type="evidence" value="ECO:0000316"/>
    <property type="project" value="MGI"/>
</dbReference>
<dbReference type="GO" id="GO:0030983">
    <property type="term" value="F:mismatched DNA binding"/>
    <property type="evidence" value="ECO:0007669"/>
    <property type="project" value="InterPro"/>
</dbReference>
<dbReference type="GO" id="GO:0006298">
    <property type="term" value="P:mismatch repair"/>
    <property type="evidence" value="ECO:0000315"/>
    <property type="project" value="MGI"/>
</dbReference>
<dbReference type="GO" id="GO:0016447">
    <property type="term" value="P:somatic recombination of immunoglobulin gene segments"/>
    <property type="evidence" value="ECO:0000315"/>
    <property type="project" value="MGI"/>
</dbReference>
<dbReference type="FunFam" id="1.10.1420.10:FF:000010">
    <property type="entry name" value="DNA mismatch repair protein"/>
    <property type="match status" value="1"/>
</dbReference>
<dbReference type="FunFam" id="3.30.420.110:FF:000005">
    <property type="entry name" value="DNA mismatch repair protein"/>
    <property type="match status" value="1"/>
</dbReference>
<dbReference type="FunFam" id="3.40.1170.10:FF:000004">
    <property type="entry name" value="DNA mismatch repair protein"/>
    <property type="match status" value="1"/>
</dbReference>
<dbReference type="FunFam" id="3.40.50.300:FF:000917">
    <property type="entry name" value="DNA mismatch repair protein"/>
    <property type="match status" value="1"/>
</dbReference>
<dbReference type="FunFam" id="1.10.1420.10:FF:000004">
    <property type="entry name" value="DNA mismatch repair protein Msh3"/>
    <property type="match status" value="1"/>
</dbReference>
<dbReference type="Gene3D" id="1.10.1420.10">
    <property type="match status" value="2"/>
</dbReference>
<dbReference type="Gene3D" id="3.40.1170.10">
    <property type="entry name" value="DNA repair protein MutS, domain I"/>
    <property type="match status" value="1"/>
</dbReference>
<dbReference type="Gene3D" id="3.30.420.110">
    <property type="entry name" value="MutS, connector domain"/>
    <property type="match status" value="1"/>
</dbReference>
<dbReference type="Gene3D" id="3.40.50.300">
    <property type="entry name" value="P-loop containing nucleotide triphosphate hydrolases"/>
    <property type="match status" value="1"/>
</dbReference>
<dbReference type="InterPro" id="IPR007695">
    <property type="entry name" value="DNA_mismatch_repair_MutS-lik_N"/>
</dbReference>
<dbReference type="InterPro" id="IPR017261">
    <property type="entry name" value="DNA_mismatch_repair_MutS/MSH"/>
</dbReference>
<dbReference type="InterPro" id="IPR000432">
    <property type="entry name" value="DNA_mismatch_repair_MutS_C"/>
</dbReference>
<dbReference type="InterPro" id="IPR007696">
    <property type="entry name" value="DNA_mismatch_repair_MutS_core"/>
</dbReference>
<dbReference type="InterPro" id="IPR016151">
    <property type="entry name" value="DNA_mismatch_repair_MutS_N"/>
</dbReference>
<dbReference type="InterPro" id="IPR036187">
    <property type="entry name" value="DNA_mismatch_repair_MutS_sf"/>
</dbReference>
<dbReference type="InterPro" id="IPR007860">
    <property type="entry name" value="DNA_mmatch_repair_MutS_con_dom"/>
</dbReference>
<dbReference type="InterPro" id="IPR045076">
    <property type="entry name" value="MutS"/>
</dbReference>
<dbReference type="InterPro" id="IPR036678">
    <property type="entry name" value="MutS_con_dom_sf"/>
</dbReference>
<dbReference type="InterPro" id="IPR027417">
    <property type="entry name" value="P-loop_NTPase"/>
</dbReference>
<dbReference type="NCBIfam" id="NF003810">
    <property type="entry name" value="PRK05399.1"/>
    <property type="match status" value="1"/>
</dbReference>
<dbReference type="PANTHER" id="PTHR11361:SF122">
    <property type="entry name" value="DNA MISMATCH REPAIR PROTEIN MSH3"/>
    <property type="match status" value="1"/>
</dbReference>
<dbReference type="PANTHER" id="PTHR11361">
    <property type="entry name" value="DNA MISMATCH REPAIR PROTEIN MUTS FAMILY MEMBER"/>
    <property type="match status" value="1"/>
</dbReference>
<dbReference type="Pfam" id="PF01624">
    <property type="entry name" value="MutS_I"/>
    <property type="match status" value="1"/>
</dbReference>
<dbReference type="Pfam" id="PF05188">
    <property type="entry name" value="MutS_II"/>
    <property type="match status" value="1"/>
</dbReference>
<dbReference type="Pfam" id="PF05192">
    <property type="entry name" value="MutS_III"/>
    <property type="match status" value="1"/>
</dbReference>
<dbReference type="Pfam" id="PF00488">
    <property type="entry name" value="MutS_V"/>
    <property type="match status" value="1"/>
</dbReference>
<dbReference type="PIRSF" id="PIRSF037677">
    <property type="entry name" value="DNA_mis_repair_Msh6"/>
    <property type="match status" value="1"/>
</dbReference>
<dbReference type="SMART" id="SM00534">
    <property type="entry name" value="MUTSac"/>
    <property type="match status" value="1"/>
</dbReference>
<dbReference type="SMART" id="SM00533">
    <property type="entry name" value="MUTSd"/>
    <property type="match status" value="1"/>
</dbReference>
<dbReference type="SUPFAM" id="SSF55271">
    <property type="entry name" value="DNA repair protein MutS, domain I"/>
    <property type="match status" value="1"/>
</dbReference>
<dbReference type="SUPFAM" id="SSF53150">
    <property type="entry name" value="DNA repair protein MutS, domain II"/>
    <property type="match status" value="1"/>
</dbReference>
<dbReference type="SUPFAM" id="SSF48334">
    <property type="entry name" value="DNA repair protein MutS, domain III"/>
    <property type="match status" value="1"/>
</dbReference>
<dbReference type="SUPFAM" id="SSF52540">
    <property type="entry name" value="P-loop containing nucleoside triphosphate hydrolases"/>
    <property type="match status" value="1"/>
</dbReference>
<dbReference type="PROSITE" id="PS00486">
    <property type="entry name" value="DNA_MISMATCH_REPAIR_2"/>
    <property type="match status" value="1"/>
</dbReference>
<proteinExistence type="evidence at transcript level"/>
<sequence>MPRGKSASGGSTAAGPGPGRQTVLSRFFRSAGSLRSSASSTEPAEKVTEGDSRKRSLGNGGPTKKKARKVPEKEEENISVASHHPEAKKCLRPRIVLKSLEKLKEFCCDSALPQNRVQTEALRERLEVLPRCTDFEDITLQRAKNAVLSEDSKSQANQKDSQFGPCPEVFQKTSDCKPFNKRSKSVYTPLELQYLDMKQQHKDAVLCVECGYKYRFFGEDAEIAARELNIYCHLDHNFMTASIPTHRLFVHVRRLVAKGYKVGVVKQTETAALKAIGDNKSSVFSRKLTALYTKSTLIGEDVNPLIRLDDSVNIDEVMTDTSTNYLLCIYEEKENIKDKKKGNLSVGVVGVQPATGEVVFDCFQDSASRLELETRISSLQPVELLLPSDLSEPTEMLIQRATNVSVRDDRIRVERMNNTYFEYSHAFQTVTEFYAREIVDSQGSQSLSGVINLEKPVICALAAVIRYLKEFNLEKMLSKPESFKQLSSGMEFMRINGTTLRNLEMVQNQTDMKTKGSLLWVLDHTKTSFGRRKLKNWVTQPLLKLREINARLDAVSDVLHSESSVFEQIENLLRKLPDVERGLCSIYHKKCSTQEFFLIVKSLCQLKSELQALMPAVNSHVQSDLLRALIVELLSPVEHYLKVLNGPAAKVGDKTELFKDLSDFPLIKKRKNEIQEVIHSIQMRLQEFRKILKLPSLQYVTVSGQEFMIEIKNSAVSCIPADWVKVGSTKAVSRFHPPFIVESYRRLNQLREQLVLDCNAEWLGFLENFGEHYHTLCKAVDHLATVDCIFSLAKVAKQGNYCRPTLQEEKKIIIKNGRHPMIDVLLGEQDQFVPNSTSLSDSERVMIITGPNMGGKSSYIKQVTLVTIMAQIGSYVPAEEATIGIVDGIFTRMGAADNIYKGRSTFMEQLTDTAEIIRRASPQSLVILDELGRGTSTHDGIAIAYATLEYFIRDVKSLTLFVTHYPPVCELEKCYPEQVGNYHMGFLVNEDESKQDSGDMEQMPDSVTFLYQITRGIAARSYGLNVAKLADVPREVLQKAAHKSKELEGLVSLRRKRLECFTDLWMTHSVKDLHTWADKLEMEEIQTSLPH</sequence>
<feature type="chain" id="PRO_0000115193" description="DNA mismatch repair protein Msh3">
    <location>
        <begin position="1"/>
        <end position="1091"/>
    </location>
</feature>
<feature type="region of interest" description="Disordered" evidence="4">
    <location>
        <begin position="1"/>
        <end position="84"/>
    </location>
</feature>
<feature type="compositionally biased region" description="Low complexity" evidence="4">
    <location>
        <begin position="1"/>
        <end position="15"/>
    </location>
</feature>
<feature type="compositionally biased region" description="Low complexity" evidence="4">
    <location>
        <begin position="24"/>
        <end position="40"/>
    </location>
</feature>
<feature type="compositionally biased region" description="Basic and acidic residues" evidence="4">
    <location>
        <begin position="43"/>
        <end position="54"/>
    </location>
</feature>
<feature type="binding site" evidence="3">
    <location>
        <begin position="850"/>
        <end position="857"/>
    </location>
    <ligand>
        <name>ATP</name>
        <dbReference type="ChEBI" id="CHEBI:30616"/>
    </ligand>
</feature>
<feature type="modified residue" description="Phosphoserine" evidence="2">
    <location>
        <position position="33"/>
    </location>
</feature>
<feature type="sequence conflict" description="In Ref. 2; AAB60711." evidence="5" ref="2">
    <original>MV</original>
    <variation>IL</variation>
    <location>
        <begin position="505"/>
        <end position="506"/>
    </location>
</feature>
<feature type="sequence conflict" description="In Ref. 2; AAB60711." evidence="5" ref="2">
    <original>T</original>
    <variation>A</variation>
    <location>
        <position position="864"/>
    </location>
</feature>
<gene>
    <name type="primary">Msh3</name>
    <name type="synonym">Rep-3</name>
</gene>
<accession>P13705</accession>
<keyword id="KW-0067">ATP-binding</keyword>
<keyword id="KW-0227">DNA damage</keyword>
<keyword id="KW-0234">DNA repair</keyword>
<keyword id="KW-0238">DNA-binding</keyword>
<keyword id="KW-0547">Nucleotide-binding</keyword>
<keyword id="KW-0597">Phosphoprotein</keyword>
<keyword id="KW-1185">Reference proteome</keyword>
<name>MSH3_MOUSE</name>
<comment type="function">
    <text evidence="1">Component of the post-replicative DNA mismatch repair system (MMR). Heterodimerizes with MSH2 to form MutS beta which binds to DNA mismatches thereby initiating DNA repair. When bound, the MutS beta heterodimer bends the DNA helix and shields approximately 20 base pairs. MutS beta recognizes large insertion-deletion loops (IDL) up to 13 nucleotides long. After mismatch binding, forms a ternary complex with the MutL alpha heterodimer, which is thought to be responsible for directing the downstream MMR events, including strand discrimination, excision, and resynthesis (By similarity).</text>
</comment>
<comment type="subunit">
    <text evidence="2">Component of the DNA mismatch repair (MMR) complex composed at least of MSH2, MSH3, MSH6, PMS1 and MLH1. Heterodimer consisting of MSH2-MSH3 (MutS beta). Forms a ternary complex with MutL alpha (MLH1-PMS1). Interacts with EXO1. Interacts with MCM9.</text>
</comment>
<comment type="similarity">
    <text evidence="5">Belongs to the DNA mismatch repair MutS family. MSH3 subfamily.</text>
</comment>
<organism>
    <name type="scientific">Mus musculus</name>
    <name type="common">Mouse</name>
    <dbReference type="NCBI Taxonomy" id="10090"/>
    <lineage>
        <taxon>Eukaryota</taxon>
        <taxon>Metazoa</taxon>
        <taxon>Chordata</taxon>
        <taxon>Craniata</taxon>
        <taxon>Vertebrata</taxon>
        <taxon>Euteleostomi</taxon>
        <taxon>Mammalia</taxon>
        <taxon>Eutheria</taxon>
        <taxon>Euarchontoglires</taxon>
        <taxon>Glires</taxon>
        <taxon>Rodentia</taxon>
        <taxon>Myomorpha</taxon>
        <taxon>Muroidea</taxon>
        <taxon>Muridae</taxon>
        <taxon>Murinae</taxon>
        <taxon>Mus</taxon>
        <taxon>Mus</taxon>
    </lineage>
</organism>
<protein>
    <recommendedName>
        <fullName>DNA mismatch repair protein Msh3</fullName>
    </recommendedName>
    <alternativeName>
        <fullName>Protein repair-1</fullName>
        <shortName>REP-1</shortName>
    </alternativeName>
    <alternativeName>
        <fullName>Protein repair-3</fullName>
        <shortName>REP-3</shortName>
    </alternativeName>
</protein>